<gene>
    <name evidence="1" type="primary">rlmN</name>
    <name type="ordered locus">SSU98_1686</name>
</gene>
<comment type="function">
    <text evidence="1">Specifically methylates position 2 of adenine 2503 in 23S rRNA and position 2 of adenine 37 in tRNAs.</text>
</comment>
<comment type="catalytic activity">
    <reaction evidence="1">
        <text>adenosine(2503) in 23S rRNA + 2 reduced [2Fe-2S]-[ferredoxin] + 2 S-adenosyl-L-methionine = 2-methyladenosine(2503) in 23S rRNA + 5'-deoxyadenosine + L-methionine + 2 oxidized [2Fe-2S]-[ferredoxin] + S-adenosyl-L-homocysteine</text>
        <dbReference type="Rhea" id="RHEA:42916"/>
        <dbReference type="Rhea" id="RHEA-COMP:10000"/>
        <dbReference type="Rhea" id="RHEA-COMP:10001"/>
        <dbReference type="Rhea" id="RHEA-COMP:10152"/>
        <dbReference type="Rhea" id="RHEA-COMP:10282"/>
        <dbReference type="ChEBI" id="CHEBI:17319"/>
        <dbReference type="ChEBI" id="CHEBI:33737"/>
        <dbReference type="ChEBI" id="CHEBI:33738"/>
        <dbReference type="ChEBI" id="CHEBI:57844"/>
        <dbReference type="ChEBI" id="CHEBI:57856"/>
        <dbReference type="ChEBI" id="CHEBI:59789"/>
        <dbReference type="ChEBI" id="CHEBI:74411"/>
        <dbReference type="ChEBI" id="CHEBI:74497"/>
        <dbReference type="EC" id="2.1.1.192"/>
    </reaction>
</comment>
<comment type="catalytic activity">
    <reaction evidence="1">
        <text>adenosine(37) in tRNA + 2 reduced [2Fe-2S]-[ferredoxin] + 2 S-adenosyl-L-methionine = 2-methyladenosine(37) in tRNA + 5'-deoxyadenosine + L-methionine + 2 oxidized [2Fe-2S]-[ferredoxin] + S-adenosyl-L-homocysteine</text>
        <dbReference type="Rhea" id="RHEA:43332"/>
        <dbReference type="Rhea" id="RHEA-COMP:10000"/>
        <dbReference type="Rhea" id="RHEA-COMP:10001"/>
        <dbReference type="Rhea" id="RHEA-COMP:10162"/>
        <dbReference type="Rhea" id="RHEA-COMP:10485"/>
        <dbReference type="ChEBI" id="CHEBI:17319"/>
        <dbReference type="ChEBI" id="CHEBI:33737"/>
        <dbReference type="ChEBI" id="CHEBI:33738"/>
        <dbReference type="ChEBI" id="CHEBI:57844"/>
        <dbReference type="ChEBI" id="CHEBI:57856"/>
        <dbReference type="ChEBI" id="CHEBI:59789"/>
        <dbReference type="ChEBI" id="CHEBI:74411"/>
        <dbReference type="ChEBI" id="CHEBI:74497"/>
        <dbReference type="EC" id="2.1.1.192"/>
    </reaction>
</comment>
<comment type="cofactor">
    <cofactor evidence="1">
        <name>[4Fe-4S] cluster</name>
        <dbReference type="ChEBI" id="CHEBI:49883"/>
    </cofactor>
    <text evidence="1">Binds 1 [4Fe-4S] cluster. The cluster is coordinated with 3 cysteines and an exchangeable S-adenosyl-L-methionine.</text>
</comment>
<comment type="subcellular location">
    <subcellularLocation>
        <location evidence="1">Cytoplasm</location>
    </subcellularLocation>
</comment>
<comment type="miscellaneous">
    <text evidence="1">Reaction proceeds by a ping-pong mechanism involving intermediate methylation of a conserved cysteine residue.</text>
</comment>
<comment type="similarity">
    <text evidence="1">Belongs to the radical SAM superfamily. RlmN family.</text>
</comment>
<organism>
    <name type="scientific">Streptococcus suis (strain 98HAH33)</name>
    <dbReference type="NCBI Taxonomy" id="391296"/>
    <lineage>
        <taxon>Bacteria</taxon>
        <taxon>Bacillati</taxon>
        <taxon>Bacillota</taxon>
        <taxon>Bacilli</taxon>
        <taxon>Lactobacillales</taxon>
        <taxon>Streptococcaceae</taxon>
        <taxon>Streptococcus</taxon>
    </lineage>
</organism>
<proteinExistence type="inferred from homology"/>
<dbReference type="EC" id="2.1.1.192" evidence="1"/>
<dbReference type="EMBL" id="CP000408">
    <property type="protein sequence ID" value="ABP92844.1"/>
    <property type="molecule type" value="Genomic_DNA"/>
</dbReference>
<dbReference type="SMR" id="A4W3A5"/>
<dbReference type="KEGG" id="ssv:SSU98_1686"/>
<dbReference type="HOGENOM" id="CLU_029101_0_1_9"/>
<dbReference type="GO" id="GO:0005737">
    <property type="term" value="C:cytoplasm"/>
    <property type="evidence" value="ECO:0007669"/>
    <property type="project" value="UniProtKB-SubCell"/>
</dbReference>
<dbReference type="GO" id="GO:0051539">
    <property type="term" value="F:4 iron, 4 sulfur cluster binding"/>
    <property type="evidence" value="ECO:0007669"/>
    <property type="project" value="UniProtKB-UniRule"/>
</dbReference>
<dbReference type="GO" id="GO:0046872">
    <property type="term" value="F:metal ion binding"/>
    <property type="evidence" value="ECO:0007669"/>
    <property type="project" value="UniProtKB-KW"/>
</dbReference>
<dbReference type="GO" id="GO:0070040">
    <property type="term" value="F:rRNA (adenine(2503)-C2-)-methyltransferase activity"/>
    <property type="evidence" value="ECO:0007669"/>
    <property type="project" value="UniProtKB-UniRule"/>
</dbReference>
<dbReference type="GO" id="GO:0019843">
    <property type="term" value="F:rRNA binding"/>
    <property type="evidence" value="ECO:0007669"/>
    <property type="project" value="UniProtKB-UniRule"/>
</dbReference>
<dbReference type="GO" id="GO:0002935">
    <property type="term" value="F:tRNA (adenine(37)-C2)-methyltransferase activity"/>
    <property type="evidence" value="ECO:0007669"/>
    <property type="project" value="UniProtKB-UniRule"/>
</dbReference>
<dbReference type="GO" id="GO:0000049">
    <property type="term" value="F:tRNA binding"/>
    <property type="evidence" value="ECO:0007669"/>
    <property type="project" value="UniProtKB-UniRule"/>
</dbReference>
<dbReference type="GO" id="GO:0070475">
    <property type="term" value="P:rRNA base methylation"/>
    <property type="evidence" value="ECO:0007669"/>
    <property type="project" value="UniProtKB-UniRule"/>
</dbReference>
<dbReference type="GO" id="GO:0030488">
    <property type="term" value="P:tRNA methylation"/>
    <property type="evidence" value="ECO:0007669"/>
    <property type="project" value="UniProtKB-UniRule"/>
</dbReference>
<dbReference type="CDD" id="cd01335">
    <property type="entry name" value="Radical_SAM"/>
    <property type="match status" value="1"/>
</dbReference>
<dbReference type="FunFam" id="3.20.20.70:FF:000014">
    <property type="entry name" value="Probable dual-specificity RNA methyltransferase RlmN"/>
    <property type="match status" value="1"/>
</dbReference>
<dbReference type="Gene3D" id="1.10.150.530">
    <property type="match status" value="1"/>
</dbReference>
<dbReference type="Gene3D" id="3.20.20.70">
    <property type="entry name" value="Aldolase class I"/>
    <property type="match status" value="1"/>
</dbReference>
<dbReference type="HAMAP" id="MF_01849">
    <property type="entry name" value="RNA_methyltr_RlmN"/>
    <property type="match status" value="1"/>
</dbReference>
<dbReference type="InterPro" id="IPR013785">
    <property type="entry name" value="Aldolase_TIM"/>
</dbReference>
<dbReference type="InterPro" id="IPR040072">
    <property type="entry name" value="Methyltransferase_A"/>
</dbReference>
<dbReference type="InterPro" id="IPR048641">
    <property type="entry name" value="RlmN_N"/>
</dbReference>
<dbReference type="InterPro" id="IPR027492">
    <property type="entry name" value="RNA_MTrfase_RlmN"/>
</dbReference>
<dbReference type="InterPro" id="IPR004383">
    <property type="entry name" value="rRNA_lsu_MTrfase_RlmN/Cfr"/>
</dbReference>
<dbReference type="InterPro" id="IPR007197">
    <property type="entry name" value="rSAM"/>
</dbReference>
<dbReference type="NCBIfam" id="TIGR00048">
    <property type="entry name" value="rRNA_mod_RlmN"/>
    <property type="match status" value="1"/>
</dbReference>
<dbReference type="PANTHER" id="PTHR30544">
    <property type="entry name" value="23S RRNA METHYLTRANSFERASE"/>
    <property type="match status" value="1"/>
</dbReference>
<dbReference type="PANTHER" id="PTHR30544:SF5">
    <property type="entry name" value="RADICAL SAM CORE DOMAIN-CONTAINING PROTEIN"/>
    <property type="match status" value="1"/>
</dbReference>
<dbReference type="Pfam" id="PF04055">
    <property type="entry name" value="Radical_SAM"/>
    <property type="match status" value="1"/>
</dbReference>
<dbReference type="Pfam" id="PF21016">
    <property type="entry name" value="RlmN_N"/>
    <property type="match status" value="1"/>
</dbReference>
<dbReference type="PIRSF" id="PIRSF006004">
    <property type="entry name" value="CHP00048"/>
    <property type="match status" value="1"/>
</dbReference>
<dbReference type="SFLD" id="SFLDF00275">
    <property type="entry name" value="adenosine_C2_methyltransferase"/>
    <property type="match status" value="1"/>
</dbReference>
<dbReference type="SFLD" id="SFLDG01062">
    <property type="entry name" value="methyltransferase_(Class_A)"/>
    <property type="match status" value="1"/>
</dbReference>
<dbReference type="SUPFAM" id="SSF102114">
    <property type="entry name" value="Radical SAM enzymes"/>
    <property type="match status" value="1"/>
</dbReference>
<dbReference type="PROSITE" id="PS51918">
    <property type="entry name" value="RADICAL_SAM"/>
    <property type="match status" value="1"/>
</dbReference>
<accession>A4W3A5</accession>
<evidence type="ECO:0000255" key="1">
    <source>
        <dbReference type="HAMAP-Rule" id="MF_01849"/>
    </source>
</evidence>
<evidence type="ECO:0000255" key="2">
    <source>
        <dbReference type="PROSITE-ProRule" id="PRU01266"/>
    </source>
</evidence>
<reference key="1">
    <citation type="journal article" date="2007" name="PLoS ONE">
        <title>A glimpse of streptococcal toxic shock syndrome from comparative genomics of S. suis 2 Chinese isolates.</title>
        <authorList>
            <person name="Chen C."/>
            <person name="Tang J."/>
            <person name="Dong W."/>
            <person name="Wang C."/>
            <person name="Feng Y."/>
            <person name="Wang J."/>
            <person name="Zheng F."/>
            <person name="Pan X."/>
            <person name="Liu D."/>
            <person name="Li M."/>
            <person name="Song Y."/>
            <person name="Zhu X."/>
            <person name="Sun H."/>
            <person name="Feng T."/>
            <person name="Guo Z."/>
            <person name="Ju A."/>
            <person name="Ge J."/>
            <person name="Dong Y."/>
            <person name="Sun W."/>
            <person name="Jiang Y."/>
            <person name="Wang J."/>
            <person name="Yan J."/>
            <person name="Yang H."/>
            <person name="Wang X."/>
            <person name="Gao G.F."/>
            <person name="Yang R."/>
            <person name="Wang J."/>
            <person name="Yu J."/>
        </authorList>
    </citation>
    <scope>NUCLEOTIDE SEQUENCE [LARGE SCALE GENOMIC DNA]</scope>
    <source>
        <strain>98HAH33</strain>
    </source>
</reference>
<name>RLMN_STRS2</name>
<keyword id="KW-0004">4Fe-4S</keyword>
<keyword id="KW-0963">Cytoplasm</keyword>
<keyword id="KW-1015">Disulfide bond</keyword>
<keyword id="KW-0408">Iron</keyword>
<keyword id="KW-0411">Iron-sulfur</keyword>
<keyword id="KW-0479">Metal-binding</keyword>
<keyword id="KW-0489">Methyltransferase</keyword>
<keyword id="KW-0698">rRNA processing</keyword>
<keyword id="KW-0949">S-adenosyl-L-methionine</keyword>
<keyword id="KW-0808">Transferase</keyword>
<keyword id="KW-0819">tRNA processing</keyword>
<protein>
    <recommendedName>
        <fullName evidence="1">Probable dual-specificity RNA methyltransferase RlmN</fullName>
        <ecNumber evidence="1">2.1.1.192</ecNumber>
    </recommendedName>
    <alternativeName>
        <fullName evidence="1">23S rRNA (adenine(2503)-C(2))-methyltransferase</fullName>
    </alternativeName>
    <alternativeName>
        <fullName evidence="1">23S rRNA m2A2503 methyltransferase</fullName>
    </alternativeName>
    <alternativeName>
        <fullName evidence="1">Ribosomal RNA large subunit methyltransferase N</fullName>
    </alternativeName>
    <alternativeName>
        <fullName evidence="1">tRNA (adenine(37)-C(2))-methyltransferase</fullName>
    </alternativeName>
    <alternativeName>
        <fullName evidence="1">tRNA m2A37 methyltransferase</fullName>
    </alternativeName>
</protein>
<sequence>MKPSIYAFSQANLVDWILENGEKKFRATQIWEWLYRSRVQSFAEMTNLPKSLIEKLEEHFVVNPLKQRIVQESKDGTIKYLFELPDGMLIETVLMHQHYGLSVCVTTQVGCNIGCTFCASGLIPKQRDLTSGEIVAQIMLVQKYLDERNQNERVSHIVVMGIGEPLDNYDNVMTFLRVVNDDKGLAIGARHITVSTSGLAPKIREFAREGVQVNLAVSLHAPNNDLRSSIMRINRKFPIEVLFEAIEDYIKVTNRRVTFEYIMLNEVNDGVEQAQELADLTKNIRKLSYINLIPYNPVSEHDQYSRSTKERTLAFFDVLKKNGVNCVVRQEHGTDIDAACGQLRSNTLKKDREKARARIAAAKAKAGIRA</sequence>
<feature type="chain" id="PRO_0000350469" description="Probable dual-specificity RNA methyltransferase RlmN">
    <location>
        <begin position="1"/>
        <end position="370"/>
    </location>
</feature>
<feature type="domain" description="Radical SAM core" evidence="2">
    <location>
        <begin position="97"/>
        <end position="329"/>
    </location>
</feature>
<feature type="active site" description="Proton acceptor" evidence="1">
    <location>
        <position position="91"/>
    </location>
</feature>
<feature type="active site" description="S-methylcysteine intermediate" evidence="1">
    <location>
        <position position="340"/>
    </location>
</feature>
<feature type="binding site" evidence="1">
    <location>
        <position position="111"/>
    </location>
    <ligand>
        <name>[4Fe-4S] cluster</name>
        <dbReference type="ChEBI" id="CHEBI:49883"/>
        <note>4Fe-4S-S-AdoMet</note>
    </ligand>
</feature>
<feature type="binding site" evidence="1">
    <location>
        <position position="115"/>
    </location>
    <ligand>
        <name>[4Fe-4S] cluster</name>
        <dbReference type="ChEBI" id="CHEBI:49883"/>
        <note>4Fe-4S-S-AdoMet</note>
    </ligand>
</feature>
<feature type="binding site" evidence="1">
    <location>
        <position position="118"/>
    </location>
    <ligand>
        <name>[4Fe-4S] cluster</name>
        <dbReference type="ChEBI" id="CHEBI:49883"/>
        <note>4Fe-4S-S-AdoMet</note>
    </ligand>
</feature>
<feature type="binding site" evidence="1">
    <location>
        <begin position="163"/>
        <end position="164"/>
    </location>
    <ligand>
        <name>S-adenosyl-L-methionine</name>
        <dbReference type="ChEBI" id="CHEBI:59789"/>
    </ligand>
</feature>
<feature type="binding site" evidence="1">
    <location>
        <position position="195"/>
    </location>
    <ligand>
        <name>S-adenosyl-L-methionine</name>
        <dbReference type="ChEBI" id="CHEBI:59789"/>
    </ligand>
</feature>
<feature type="binding site" evidence="1">
    <location>
        <begin position="218"/>
        <end position="220"/>
    </location>
    <ligand>
        <name>S-adenosyl-L-methionine</name>
        <dbReference type="ChEBI" id="CHEBI:59789"/>
    </ligand>
</feature>
<feature type="binding site" evidence="1">
    <location>
        <position position="296"/>
    </location>
    <ligand>
        <name>S-adenosyl-L-methionine</name>
        <dbReference type="ChEBI" id="CHEBI:59789"/>
    </ligand>
</feature>
<feature type="disulfide bond" description="(transient)" evidence="1">
    <location>
        <begin position="104"/>
        <end position="340"/>
    </location>
</feature>